<organism>
    <name type="scientific">Streptococcus pneumoniae serotype 4 (strain ATCC BAA-334 / TIGR4)</name>
    <dbReference type="NCBI Taxonomy" id="170187"/>
    <lineage>
        <taxon>Bacteria</taxon>
        <taxon>Bacillati</taxon>
        <taxon>Bacillota</taxon>
        <taxon>Bacilli</taxon>
        <taxon>Lactobacillales</taxon>
        <taxon>Streptococcaceae</taxon>
        <taxon>Streptococcus</taxon>
    </lineage>
</organism>
<reference key="1">
    <citation type="journal article" date="2001" name="Science">
        <title>Complete genome sequence of a virulent isolate of Streptococcus pneumoniae.</title>
        <authorList>
            <person name="Tettelin H."/>
            <person name="Nelson K.E."/>
            <person name="Paulsen I.T."/>
            <person name="Eisen J.A."/>
            <person name="Read T.D."/>
            <person name="Peterson S.N."/>
            <person name="Heidelberg J.F."/>
            <person name="DeBoy R.T."/>
            <person name="Haft D.H."/>
            <person name="Dodson R.J."/>
            <person name="Durkin A.S."/>
            <person name="Gwinn M.L."/>
            <person name="Kolonay J.F."/>
            <person name="Nelson W.C."/>
            <person name="Peterson J.D."/>
            <person name="Umayam L.A."/>
            <person name="White O."/>
            <person name="Salzberg S.L."/>
            <person name="Lewis M.R."/>
            <person name="Radune D."/>
            <person name="Holtzapple E.K."/>
            <person name="Khouri H.M."/>
            <person name="Wolf A.M."/>
            <person name="Utterback T.R."/>
            <person name="Hansen C.L."/>
            <person name="McDonald L.A."/>
            <person name="Feldblyum T.V."/>
            <person name="Angiuoli S.V."/>
            <person name="Dickinson T."/>
            <person name="Hickey E.K."/>
            <person name="Holt I.E."/>
            <person name="Loftus B.J."/>
            <person name="Yang F."/>
            <person name="Smith H.O."/>
            <person name="Venter J.C."/>
            <person name="Dougherty B.A."/>
            <person name="Morrison D.A."/>
            <person name="Hollingshead S.K."/>
            <person name="Fraser C.M."/>
        </authorList>
    </citation>
    <scope>NUCLEOTIDE SEQUENCE [LARGE SCALE GENOMIC DNA]</scope>
    <source>
        <strain>ATCC BAA-334 / TIGR4</strain>
    </source>
</reference>
<protein>
    <recommendedName>
        <fullName evidence="1">3-hydroxyacyl-[acyl-carrier-protein] dehydratase FabZ</fullName>
        <ecNumber evidence="1">4.2.1.59</ecNumber>
    </recommendedName>
    <alternativeName>
        <fullName evidence="1">(3R)-hydroxymyristoyl-[acyl-carrier-protein] dehydratase</fullName>
        <shortName evidence="1">(3R)-hydroxymyristoyl-ACP dehydrase</shortName>
    </alternativeName>
    <alternativeName>
        <fullName evidence="1">Beta-hydroxyacyl-ACP dehydratase</fullName>
    </alternativeName>
</protein>
<proteinExistence type="inferred from homology"/>
<keyword id="KW-0963">Cytoplasm</keyword>
<keyword id="KW-0441">Lipid A biosynthesis</keyword>
<keyword id="KW-0444">Lipid biosynthesis</keyword>
<keyword id="KW-0443">Lipid metabolism</keyword>
<keyword id="KW-0456">Lyase</keyword>
<keyword id="KW-1185">Reference proteome</keyword>
<dbReference type="EC" id="4.2.1.59" evidence="1"/>
<dbReference type="EMBL" id="AE005672">
    <property type="protein sequence ID" value="AAK74587.1"/>
    <property type="molecule type" value="Genomic_DNA"/>
</dbReference>
<dbReference type="PIR" id="B95049">
    <property type="entry name" value="B95049"/>
</dbReference>
<dbReference type="RefSeq" id="WP_000565519.1">
    <property type="nucleotide sequence ID" value="NZ_CP155539.1"/>
</dbReference>
<dbReference type="SMR" id="P59201"/>
<dbReference type="PaxDb" id="170187-SP_0424"/>
<dbReference type="EnsemblBacteria" id="AAK74587">
    <property type="protein sequence ID" value="AAK74587"/>
    <property type="gene ID" value="SP_0424"/>
</dbReference>
<dbReference type="KEGG" id="spn:SP_0424"/>
<dbReference type="eggNOG" id="COG0764">
    <property type="taxonomic scope" value="Bacteria"/>
</dbReference>
<dbReference type="PhylomeDB" id="P59201"/>
<dbReference type="BioCyc" id="SPNE170187:G1FZB-439-MONOMER"/>
<dbReference type="Proteomes" id="UP000000585">
    <property type="component" value="Chromosome"/>
</dbReference>
<dbReference type="GO" id="GO:0005737">
    <property type="term" value="C:cytoplasm"/>
    <property type="evidence" value="ECO:0007669"/>
    <property type="project" value="UniProtKB-SubCell"/>
</dbReference>
<dbReference type="GO" id="GO:0016020">
    <property type="term" value="C:membrane"/>
    <property type="evidence" value="ECO:0007669"/>
    <property type="project" value="GOC"/>
</dbReference>
<dbReference type="GO" id="GO:0019171">
    <property type="term" value="F:(3R)-hydroxyacyl-[acyl-carrier-protein] dehydratase activity"/>
    <property type="evidence" value="ECO:0007669"/>
    <property type="project" value="UniProtKB-EC"/>
</dbReference>
<dbReference type="GO" id="GO:0006633">
    <property type="term" value="P:fatty acid biosynthetic process"/>
    <property type="evidence" value="ECO:0007669"/>
    <property type="project" value="UniProtKB-UniRule"/>
</dbReference>
<dbReference type="GO" id="GO:0009245">
    <property type="term" value="P:lipid A biosynthetic process"/>
    <property type="evidence" value="ECO:0007669"/>
    <property type="project" value="UniProtKB-UniRule"/>
</dbReference>
<dbReference type="CDD" id="cd01288">
    <property type="entry name" value="FabZ"/>
    <property type="match status" value="1"/>
</dbReference>
<dbReference type="FunFam" id="3.10.129.10:FF:000001">
    <property type="entry name" value="3-hydroxyacyl-[acyl-carrier-protein] dehydratase FabZ"/>
    <property type="match status" value="1"/>
</dbReference>
<dbReference type="Gene3D" id="3.10.129.10">
    <property type="entry name" value="Hotdog Thioesterase"/>
    <property type="match status" value="1"/>
</dbReference>
<dbReference type="HAMAP" id="MF_00406">
    <property type="entry name" value="FabZ"/>
    <property type="match status" value="1"/>
</dbReference>
<dbReference type="InterPro" id="IPR013114">
    <property type="entry name" value="FabA_FabZ"/>
</dbReference>
<dbReference type="InterPro" id="IPR010084">
    <property type="entry name" value="FabZ"/>
</dbReference>
<dbReference type="InterPro" id="IPR029069">
    <property type="entry name" value="HotDog_dom_sf"/>
</dbReference>
<dbReference type="NCBIfam" id="TIGR01750">
    <property type="entry name" value="fabZ"/>
    <property type="match status" value="1"/>
</dbReference>
<dbReference type="NCBIfam" id="NF000582">
    <property type="entry name" value="PRK00006.1"/>
    <property type="match status" value="1"/>
</dbReference>
<dbReference type="PANTHER" id="PTHR30272">
    <property type="entry name" value="3-HYDROXYACYL-[ACYL-CARRIER-PROTEIN] DEHYDRATASE"/>
    <property type="match status" value="1"/>
</dbReference>
<dbReference type="PANTHER" id="PTHR30272:SF1">
    <property type="entry name" value="3-HYDROXYACYL-[ACYL-CARRIER-PROTEIN] DEHYDRATASE"/>
    <property type="match status" value="1"/>
</dbReference>
<dbReference type="Pfam" id="PF07977">
    <property type="entry name" value="FabA"/>
    <property type="match status" value="1"/>
</dbReference>
<dbReference type="SUPFAM" id="SSF54637">
    <property type="entry name" value="Thioesterase/thiol ester dehydrase-isomerase"/>
    <property type="match status" value="1"/>
</dbReference>
<gene>
    <name evidence="1" type="primary">fabZ</name>
    <name type="ordered locus">SP_0424</name>
</gene>
<name>FABZ_STRPN</name>
<accession>P59201</accession>
<accession>Q9FBC0</accession>
<sequence>MIDIQGIKEALPHRYPMLLVDRVLEVSEDTIVAIKNVTINEPFFNGHFPQYPVMPGVVIMEALAQTAGVLELSKPENKGKLVFYAGMDKVKFKKQVVPGDQLVMTATFVKRRGTIAVVEAKAEVDGKLAASGTLTFAIGN</sequence>
<comment type="function">
    <text evidence="1">Involved in unsaturated fatty acids biosynthesis. Catalyzes the dehydration of short chain beta-hydroxyacyl-ACPs and long chain saturated and unsaturated beta-hydroxyacyl-ACPs.</text>
</comment>
<comment type="catalytic activity">
    <reaction evidence="1">
        <text>a (3R)-hydroxyacyl-[ACP] = a (2E)-enoyl-[ACP] + H2O</text>
        <dbReference type="Rhea" id="RHEA:13097"/>
        <dbReference type="Rhea" id="RHEA-COMP:9925"/>
        <dbReference type="Rhea" id="RHEA-COMP:9945"/>
        <dbReference type="ChEBI" id="CHEBI:15377"/>
        <dbReference type="ChEBI" id="CHEBI:78784"/>
        <dbReference type="ChEBI" id="CHEBI:78827"/>
        <dbReference type="EC" id="4.2.1.59"/>
    </reaction>
</comment>
<comment type="subcellular location">
    <subcellularLocation>
        <location evidence="1">Cytoplasm</location>
    </subcellularLocation>
</comment>
<comment type="similarity">
    <text evidence="1">Belongs to the thioester dehydratase family. FabZ subfamily.</text>
</comment>
<feature type="chain" id="PRO_0000091741" description="3-hydroxyacyl-[acyl-carrier-protein] dehydratase FabZ">
    <location>
        <begin position="1"/>
        <end position="140"/>
    </location>
</feature>
<feature type="active site" evidence="1">
    <location>
        <position position="47"/>
    </location>
</feature>
<evidence type="ECO:0000255" key="1">
    <source>
        <dbReference type="HAMAP-Rule" id="MF_00406"/>
    </source>
</evidence>